<name>DYL5B_XENLA</name>
<accession>A2VDD2</accession>
<proteinExistence type="evidence at transcript level"/>
<comment type="similarity">
    <text evidence="1">Belongs to the dynein light chain Tctex-type family.</text>
</comment>
<protein>
    <recommendedName>
        <fullName>Dynein light chain Tctex-type 5-B</fullName>
    </recommendedName>
    <alternativeName>
        <fullName>Tctex1 domain-containing protein 1-B</fullName>
    </alternativeName>
</protein>
<evidence type="ECO:0000305" key="1"/>
<reference key="1">
    <citation type="submission" date="2006-12" db="EMBL/GenBank/DDBJ databases">
        <authorList>
            <consortium name="NIH - Xenopus Gene Collection (XGC) project"/>
        </authorList>
    </citation>
    <scope>NUCLEOTIDE SEQUENCE [LARGE SCALE MRNA]</scope>
    <source>
        <tissue>Forelimb</tissue>
    </source>
</reference>
<gene>
    <name type="primary">Dynlt5-b</name>
    <name type="synonym">tctex1d1-b</name>
</gene>
<feature type="chain" id="PRO_0000284889" description="Dynein light chain Tctex-type 5-B">
    <location>
        <begin position="1" status="less than"/>
        <end position="176"/>
    </location>
</feature>
<feature type="non-terminal residue">
    <location>
        <position position="1"/>
    </location>
</feature>
<keyword id="KW-1185">Reference proteome</keyword>
<dbReference type="EMBL" id="BC129766">
    <property type="protein sequence ID" value="AAI29767.1"/>
    <property type="molecule type" value="mRNA"/>
</dbReference>
<dbReference type="SMR" id="A2VDD2"/>
<dbReference type="AGR" id="Xenbase:XB-GENE-5960259"/>
<dbReference type="Xenbase" id="XB-GENE-5960259">
    <property type="gene designation" value="dynlt5.S"/>
</dbReference>
<dbReference type="OMA" id="CRQMAKT"/>
<dbReference type="Proteomes" id="UP000186698">
    <property type="component" value="Unplaced"/>
</dbReference>
<dbReference type="GO" id="GO:0005737">
    <property type="term" value="C:cytoplasm"/>
    <property type="evidence" value="ECO:0000318"/>
    <property type="project" value="GO_Central"/>
</dbReference>
<dbReference type="GO" id="GO:0005868">
    <property type="term" value="C:cytoplasmic dynein complex"/>
    <property type="evidence" value="ECO:0000318"/>
    <property type="project" value="GO_Central"/>
</dbReference>
<dbReference type="GO" id="GO:0045505">
    <property type="term" value="F:dynein intermediate chain binding"/>
    <property type="evidence" value="ECO:0000318"/>
    <property type="project" value="GO_Central"/>
</dbReference>
<dbReference type="GO" id="GO:0007018">
    <property type="term" value="P:microtubule-based movement"/>
    <property type="evidence" value="ECO:0000318"/>
    <property type="project" value="GO_Central"/>
</dbReference>
<dbReference type="CDD" id="cd21458">
    <property type="entry name" value="DLC-like_TCTEX1D1"/>
    <property type="match status" value="1"/>
</dbReference>
<dbReference type="FunFam" id="3.30.1140.40:FF:000003">
    <property type="entry name" value="tctex1 domain-containing protein 2"/>
    <property type="match status" value="1"/>
</dbReference>
<dbReference type="Gene3D" id="3.30.1140.40">
    <property type="entry name" value="Tctex-1"/>
    <property type="match status" value="1"/>
</dbReference>
<dbReference type="InterPro" id="IPR005334">
    <property type="entry name" value="Tctex-1-like"/>
</dbReference>
<dbReference type="InterPro" id="IPR038586">
    <property type="entry name" value="Tctex-1-like_sf"/>
</dbReference>
<dbReference type="PANTHER" id="PTHR21255:SF64">
    <property type="entry name" value="DYNEIN LIGHT CHAIN TCTEX-TYPE 5"/>
    <property type="match status" value="1"/>
</dbReference>
<dbReference type="PANTHER" id="PTHR21255">
    <property type="entry name" value="T-COMPLEX-ASSOCIATED-TESTIS-EXPRESSED 1/ DYNEIN LIGHT CHAIN"/>
    <property type="match status" value="1"/>
</dbReference>
<dbReference type="Pfam" id="PF03645">
    <property type="entry name" value="Tctex-1"/>
    <property type="match status" value="1"/>
</dbReference>
<sequence>SDIAKDKAARLLKKRGSISSLGSHDVKPRGSFSKTKDSVSTVSYIDEPGHHDDIQRPAILVENTYQMGPTKRFPVASVNNILKDVLTSYLQEEKYEAELCRQMTKTISEVIKARVKDLMIPRYKIIVLIYIGQLNDQGMRVGSRCIWDPANDTFSSYSFKNSSLFALANVYGVYYE</sequence>
<organism>
    <name type="scientific">Xenopus laevis</name>
    <name type="common">African clawed frog</name>
    <dbReference type="NCBI Taxonomy" id="8355"/>
    <lineage>
        <taxon>Eukaryota</taxon>
        <taxon>Metazoa</taxon>
        <taxon>Chordata</taxon>
        <taxon>Craniata</taxon>
        <taxon>Vertebrata</taxon>
        <taxon>Euteleostomi</taxon>
        <taxon>Amphibia</taxon>
        <taxon>Batrachia</taxon>
        <taxon>Anura</taxon>
        <taxon>Pipoidea</taxon>
        <taxon>Pipidae</taxon>
        <taxon>Xenopodinae</taxon>
        <taxon>Xenopus</taxon>
        <taxon>Xenopus</taxon>
    </lineage>
</organism>